<proteinExistence type="inferred from homology"/>
<comment type="function">
    <text evidence="1">Component of the RIX1 complex required for processing of ITS2 sequences from 35S pre-rRNA and the nucleoplasmic transit of the pre-60S ribosomal subunits. Regulates pre-60S association of the critical remodeling factor MDN1.</text>
</comment>
<comment type="subunit">
    <text evidence="1">Component of the RIX1 complex, composed of IPI1, RIX1/IPI2 and IPI3 in a 1:2:2 stoichiometry. The complex interacts (via RIX1) with MDN1 (via its hexameric AAA ATPase ring) and the pre-60S ribosome particles.</text>
</comment>
<comment type="subcellular location">
    <subcellularLocation>
        <location evidence="1">Nucleus</location>
    </subcellularLocation>
</comment>
<comment type="similarity">
    <text evidence="3">Belongs to the RIX1/PELP1 family.</text>
</comment>
<evidence type="ECO:0000250" key="1">
    <source>
        <dbReference type="UniProtKB" id="P38883"/>
    </source>
</evidence>
<evidence type="ECO:0000256" key="2">
    <source>
        <dbReference type="SAM" id="MobiDB-lite"/>
    </source>
</evidence>
<evidence type="ECO:0000305" key="3"/>
<dbReference type="EMBL" id="CH981534">
    <property type="protein sequence ID" value="EDK47504.1"/>
    <property type="molecule type" value="Genomic_DNA"/>
</dbReference>
<dbReference type="RefSeq" id="XP_001523139.1">
    <property type="nucleotide sequence ID" value="XM_001523089.1"/>
</dbReference>
<dbReference type="SMR" id="A5E7U6"/>
<dbReference type="FunCoup" id="A5E7U6">
    <property type="interactions" value="315"/>
</dbReference>
<dbReference type="STRING" id="379508.A5E7U6"/>
<dbReference type="GeneID" id="5230248"/>
<dbReference type="KEGG" id="lel:PVL30_004444"/>
<dbReference type="VEuPathDB" id="FungiDB:LELG_05685"/>
<dbReference type="eggNOG" id="ENOG502R65X">
    <property type="taxonomic scope" value="Eukaryota"/>
</dbReference>
<dbReference type="HOGENOM" id="CLU_020084_1_0_1"/>
<dbReference type="InParanoid" id="A5E7U6"/>
<dbReference type="OMA" id="WCGINLI"/>
<dbReference type="OrthoDB" id="20900at2759"/>
<dbReference type="Proteomes" id="UP000001996">
    <property type="component" value="Unassembled WGS sequence"/>
</dbReference>
<dbReference type="GO" id="GO:0005634">
    <property type="term" value="C:nucleus"/>
    <property type="evidence" value="ECO:0007669"/>
    <property type="project" value="UniProtKB-SubCell"/>
</dbReference>
<dbReference type="GO" id="GO:0006364">
    <property type="term" value="P:rRNA processing"/>
    <property type="evidence" value="ECO:0007669"/>
    <property type="project" value="UniProtKB-KW"/>
</dbReference>
<dbReference type="InterPro" id="IPR016024">
    <property type="entry name" value="ARM-type_fold"/>
</dbReference>
<dbReference type="InterPro" id="IPR012583">
    <property type="entry name" value="RIX1_N"/>
</dbReference>
<dbReference type="PANTHER" id="PTHR34105">
    <property type="entry name" value="PROLINE-, GLUTAMIC ACID- AND LEUCINE-RICH PROTEIN 1"/>
    <property type="match status" value="1"/>
</dbReference>
<dbReference type="PANTHER" id="PTHR34105:SF1">
    <property type="entry name" value="PROLINE-, GLUTAMIC ACID- AND LEUCINE-RICH PROTEIN 1"/>
    <property type="match status" value="1"/>
</dbReference>
<dbReference type="Pfam" id="PF08167">
    <property type="entry name" value="RIX1"/>
    <property type="match status" value="1"/>
</dbReference>
<dbReference type="SUPFAM" id="SSF48371">
    <property type="entry name" value="ARM repeat"/>
    <property type="match status" value="1"/>
</dbReference>
<feature type="chain" id="PRO_0000308919" description="Pre-rRNA-processing protein RIX1">
    <location>
        <begin position="1"/>
        <end position="793"/>
    </location>
</feature>
<feature type="region of interest" description="Disordered" evidence="2">
    <location>
        <begin position="452"/>
        <end position="484"/>
    </location>
</feature>
<feature type="region of interest" description="Disordered" evidence="2">
    <location>
        <begin position="621"/>
        <end position="659"/>
    </location>
</feature>
<feature type="region of interest" description="Disordered" evidence="2">
    <location>
        <begin position="672"/>
        <end position="704"/>
    </location>
</feature>
<feature type="region of interest" description="Disordered" evidence="2">
    <location>
        <begin position="749"/>
        <end position="793"/>
    </location>
</feature>
<feature type="compositionally biased region" description="Basic residues" evidence="2">
    <location>
        <begin position="471"/>
        <end position="481"/>
    </location>
</feature>
<feature type="compositionally biased region" description="Acidic residues" evidence="2">
    <location>
        <begin position="630"/>
        <end position="646"/>
    </location>
</feature>
<feature type="compositionally biased region" description="Basic and acidic residues" evidence="2">
    <location>
        <begin position="672"/>
        <end position="694"/>
    </location>
</feature>
<feature type="compositionally biased region" description="Acidic residues" evidence="2">
    <location>
        <begin position="762"/>
        <end position="793"/>
    </location>
</feature>
<name>RIX1_LODEL</name>
<gene>
    <name type="primary">RIX1</name>
    <name type="ORF">LELG_05685</name>
</gene>
<accession>A5E7U6</accession>
<organism>
    <name type="scientific">Lodderomyces elongisporus (strain ATCC 11503 / CBS 2605 / JCM 1781 / NBRC 1676 / NRRL YB-4239)</name>
    <name type="common">Yeast</name>
    <name type="synonym">Saccharomyces elongisporus</name>
    <dbReference type="NCBI Taxonomy" id="379508"/>
    <lineage>
        <taxon>Eukaryota</taxon>
        <taxon>Fungi</taxon>
        <taxon>Dikarya</taxon>
        <taxon>Ascomycota</taxon>
        <taxon>Saccharomycotina</taxon>
        <taxon>Pichiomycetes</taxon>
        <taxon>Debaryomycetaceae</taxon>
        <taxon>Candida/Lodderomyces clade</taxon>
        <taxon>Lodderomyces</taxon>
    </lineage>
</organism>
<keyword id="KW-0539">Nucleus</keyword>
<keyword id="KW-1185">Reference proteome</keyword>
<keyword id="KW-0690">Ribosome biogenesis</keyword>
<keyword id="KW-0698">rRNA processing</keyword>
<reference key="1">
    <citation type="journal article" date="2009" name="Nature">
        <title>Evolution of pathogenicity and sexual reproduction in eight Candida genomes.</title>
        <authorList>
            <person name="Butler G."/>
            <person name="Rasmussen M.D."/>
            <person name="Lin M.F."/>
            <person name="Santos M.A.S."/>
            <person name="Sakthikumar S."/>
            <person name="Munro C.A."/>
            <person name="Rheinbay E."/>
            <person name="Grabherr M."/>
            <person name="Forche A."/>
            <person name="Reedy J.L."/>
            <person name="Agrafioti I."/>
            <person name="Arnaud M.B."/>
            <person name="Bates S."/>
            <person name="Brown A.J.P."/>
            <person name="Brunke S."/>
            <person name="Costanzo M.C."/>
            <person name="Fitzpatrick D.A."/>
            <person name="de Groot P.W.J."/>
            <person name="Harris D."/>
            <person name="Hoyer L.L."/>
            <person name="Hube B."/>
            <person name="Klis F.M."/>
            <person name="Kodira C."/>
            <person name="Lennard N."/>
            <person name="Logue M.E."/>
            <person name="Martin R."/>
            <person name="Neiman A.M."/>
            <person name="Nikolaou E."/>
            <person name="Quail M.A."/>
            <person name="Quinn J."/>
            <person name="Santos M.C."/>
            <person name="Schmitzberger F.F."/>
            <person name="Sherlock G."/>
            <person name="Shah P."/>
            <person name="Silverstein K.A.T."/>
            <person name="Skrzypek M.S."/>
            <person name="Soll D."/>
            <person name="Staggs R."/>
            <person name="Stansfield I."/>
            <person name="Stumpf M.P.H."/>
            <person name="Sudbery P.E."/>
            <person name="Srikantha T."/>
            <person name="Zeng Q."/>
            <person name="Berman J."/>
            <person name="Berriman M."/>
            <person name="Heitman J."/>
            <person name="Gow N.A.R."/>
            <person name="Lorenz M.C."/>
            <person name="Birren B.W."/>
            <person name="Kellis M."/>
            <person name="Cuomo C.A."/>
        </authorList>
    </citation>
    <scope>NUCLEOTIDE SEQUENCE [LARGE SCALE GENOMIC DNA]</scope>
    <source>
        <strain>ATCC 11503 / BCRC 21390 / CBS 2605 / JCM 1781 / NBRC 1676 / NRRL YB-4239</strain>
    </source>
</reference>
<sequence>MSIINIVLEGISENHSSQSIVPVLELLRNDKTILSNISKLQLQQLVSRSLQLVRSSDSYSKWCGINLIHQLSSNYVIVAQSGVQFMSALIAVLESYNSTINVLILRNCIECLQVLMHEIRGKPALTREILTPKLSTIITLVMGHIQFDAETCLNLLYDVILHHPNTFRPFANKLRSKLLVFLKGGFGVEFVEMPTSLRKIICQTMAILPIIEKNEPEAKWGNDVKNVISEVTGILNVFDEFFNFRDDSSLGKLISKLPGRGERAELGEGDRERVFDDLSIDFNEPRSLLAISDQVETLLQLLKHYLVGGGITSVRLPLGLCLTLLEVVFSINARFLSYKSDVRDDEIRQLISTVLNRVHTSGIELLSSLLQFRGALVPHLNQIWTMLEYLVPMIQNKRIDAAEVVKNEAVFAKLVECVGLYLNLVGAVSDGASLVPFVDVALTLVEPRKDSAGNMQQSAADGQQKNQNKNKNQKNKIKKKNASSAPMSDILSHEHLFQQTIPTQTLLAVQYFFSQVITKVELPSNQHYKTLRFIIRQCVEHKNSNLEQAVPKQLRDLLVNTVLYPGYDKNNALPIVSSILIDDPIISVFNNPRLPALPKYHSMSTSMDNKDVTEVGLEQTTYQRNRNGDDDHDDDDDDDDDDDEEVSASKGSGKKLSAKELAIQNLMREQAERQKLDREKEANARIEKDAEHEATPSFAFQMEKRPREEIVEEVGKVEKKIKVGEHGLVKDTVLKSTVETVVDNKNDVANVSKNDQAQDAVGADEDNEGSDFEIPEINMELDTDEEEEGEEAE</sequence>
<protein>
    <recommendedName>
        <fullName>Pre-rRNA-processing protein RIX1</fullName>
    </recommendedName>
</protein>